<protein>
    <recommendedName>
        <fullName evidence="1">Nicotinate-nucleotide--dimethylbenzimidazole phosphoribosyltransferase</fullName>
        <shortName evidence="1">NN:DBI PRT</shortName>
        <ecNumber evidence="1">2.4.2.21</ecNumber>
    </recommendedName>
    <alternativeName>
        <fullName evidence="1">N(1)-alpha-phosphoribosyltransferase</fullName>
    </alternativeName>
</protein>
<accession>B3R647</accession>
<feature type="chain" id="PRO_1000100460" description="Nicotinate-nucleotide--dimethylbenzimidazole phosphoribosyltransferase">
    <location>
        <begin position="1"/>
        <end position="346"/>
    </location>
</feature>
<feature type="active site" description="Proton acceptor" evidence="1">
    <location>
        <position position="312"/>
    </location>
</feature>
<keyword id="KW-0169">Cobalamin biosynthesis</keyword>
<keyword id="KW-0328">Glycosyltransferase</keyword>
<keyword id="KW-0808">Transferase</keyword>
<reference key="1">
    <citation type="journal article" date="2008" name="Genome Res.">
        <title>Genome sequence of the beta-rhizobium Cupriavidus taiwanensis and comparative genomics of rhizobia.</title>
        <authorList>
            <person name="Amadou C."/>
            <person name="Pascal G."/>
            <person name="Mangenot S."/>
            <person name="Glew M."/>
            <person name="Bontemps C."/>
            <person name="Capela D."/>
            <person name="Carrere S."/>
            <person name="Cruveiller S."/>
            <person name="Dossat C."/>
            <person name="Lajus A."/>
            <person name="Marchetti M."/>
            <person name="Poinsot V."/>
            <person name="Rouy Z."/>
            <person name="Servin B."/>
            <person name="Saad M."/>
            <person name="Schenowitz C."/>
            <person name="Barbe V."/>
            <person name="Batut J."/>
            <person name="Medigue C."/>
            <person name="Masson-Boivin C."/>
        </authorList>
    </citation>
    <scope>NUCLEOTIDE SEQUENCE [LARGE SCALE GENOMIC DNA]</scope>
    <source>
        <strain>DSM 17343 / BCRC 17206 / CCUG 44338 / CIP 107171 / LMG 19424 / R1</strain>
    </source>
</reference>
<organism>
    <name type="scientific">Cupriavidus taiwanensis (strain DSM 17343 / BCRC 17206 / CCUG 44338 / CIP 107171 / LMG 19424 / R1)</name>
    <name type="common">Ralstonia taiwanensis (strain LMG 19424)</name>
    <dbReference type="NCBI Taxonomy" id="977880"/>
    <lineage>
        <taxon>Bacteria</taxon>
        <taxon>Pseudomonadati</taxon>
        <taxon>Pseudomonadota</taxon>
        <taxon>Betaproteobacteria</taxon>
        <taxon>Burkholderiales</taxon>
        <taxon>Burkholderiaceae</taxon>
        <taxon>Cupriavidus</taxon>
    </lineage>
</organism>
<comment type="function">
    <text evidence="1">Catalyzes the synthesis of alpha-ribazole-5'-phosphate from nicotinate mononucleotide (NAMN) and 5,6-dimethylbenzimidazole (DMB).</text>
</comment>
<comment type="catalytic activity">
    <reaction evidence="1">
        <text>5,6-dimethylbenzimidazole + nicotinate beta-D-ribonucleotide = alpha-ribazole 5'-phosphate + nicotinate + H(+)</text>
        <dbReference type="Rhea" id="RHEA:11196"/>
        <dbReference type="ChEBI" id="CHEBI:15378"/>
        <dbReference type="ChEBI" id="CHEBI:15890"/>
        <dbReference type="ChEBI" id="CHEBI:32544"/>
        <dbReference type="ChEBI" id="CHEBI:57502"/>
        <dbReference type="ChEBI" id="CHEBI:57918"/>
        <dbReference type="EC" id="2.4.2.21"/>
    </reaction>
</comment>
<comment type="pathway">
    <text evidence="1">Nucleoside biosynthesis; alpha-ribazole biosynthesis; alpha-ribazole from 5,6-dimethylbenzimidazole: step 1/2.</text>
</comment>
<comment type="similarity">
    <text evidence="1">Belongs to the CobT family.</text>
</comment>
<gene>
    <name evidence="1" type="primary">cobT</name>
    <name type="ordered locus">RALTA_A2442</name>
</gene>
<sequence length="346" mass="35728">MQFPEIPPLDDALRPVLQAAIDDKTKPLGALGRLEALALQLGLIQGTARPVLRRPTVIVFAADHGVADAGVSAYPAEVTAQMVQNFLAGGAAINVFSRQHGIALEIVDAGVRVPLPAAPGLVNCRIADGTRNFANEPAMTPEQAAAAMTAGMARVLRHAQQGCNVIGFGEMGIANTSAAACLMQRLTGLPLEDCIGRGTGLDDAGLARKREVLAGALARHADAQAPLDVLATFGGFEIAMMAGAFLAAAASRMVILVDGFIATAALLVAQRLDPNVLQYCVFTHCSHERGHRALLAQFDAAPLLALDLRLGEGTGCALAWPLLASAAAFLNEMATFSGAGVSTASP</sequence>
<evidence type="ECO:0000255" key="1">
    <source>
        <dbReference type="HAMAP-Rule" id="MF_00230"/>
    </source>
</evidence>
<name>COBT_CUPTR</name>
<dbReference type="EC" id="2.4.2.21" evidence="1"/>
<dbReference type="EMBL" id="CU633749">
    <property type="protein sequence ID" value="CAQ70376.1"/>
    <property type="molecule type" value="Genomic_DNA"/>
</dbReference>
<dbReference type="RefSeq" id="WP_012353676.1">
    <property type="nucleotide sequence ID" value="NC_010528.1"/>
</dbReference>
<dbReference type="SMR" id="B3R647"/>
<dbReference type="GeneID" id="29761379"/>
<dbReference type="KEGG" id="cti:RALTA_A2442"/>
<dbReference type="eggNOG" id="COG2038">
    <property type="taxonomic scope" value="Bacteria"/>
</dbReference>
<dbReference type="HOGENOM" id="CLU_002982_0_0_4"/>
<dbReference type="BioCyc" id="CTAI977880:RALTA_RS11875-MONOMER"/>
<dbReference type="UniPathway" id="UPA00061">
    <property type="reaction ID" value="UER00516"/>
</dbReference>
<dbReference type="Proteomes" id="UP000001692">
    <property type="component" value="Chromosome 1"/>
</dbReference>
<dbReference type="GO" id="GO:0008939">
    <property type="term" value="F:nicotinate-nucleotide-dimethylbenzimidazole phosphoribosyltransferase activity"/>
    <property type="evidence" value="ECO:0007669"/>
    <property type="project" value="UniProtKB-UniRule"/>
</dbReference>
<dbReference type="GO" id="GO:0009236">
    <property type="term" value="P:cobalamin biosynthetic process"/>
    <property type="evidence" value="ECO:0007669"/>
    <property type="project" value="UniProtKB-KW"/>
</dbReference>
<dbReference type="CDD" id="cd02439">
    <property type="entry name" value="DMB-PRT_CobT"/>
    <property type="match status" value="1"/>
</dbReference>
<dbReference type="FunFam" id="3.40.50.10210:FF:000001">
    <property type="entry name" value="Nicotinate-nucleotide--dimethylbenzimidazole phosphoribosyltransferase"/>
    <property type="match status" value="1"/>
</dbReference>
<dbReference type="Gene3D" id="1.10.1610.10">
    <property type="match status" value="1"/>
</dbReference>
<dbReference type="Gene3D" id="3.40.50.10210">
    <property type="match status" value="1"/>
</dbReference>
<dbReference type="HAMAP" id="MF_00230">
    <property type="entry name" value="CobT"/>
    <property type="match status" value="1"/>
</dbReference>
<dbReference type="InterPro" id="IPR003200">
    <property type="entry name" value="Nict_dMeBzImd_PRibTrfase"/>
</dbReference>
<dbReference type="InterPro" id="IPR017846">
    <property type="entry name" value="Nict_dMeBzImd_PRibTrfase_bact"/>
</dbReference>
<dbReference type="InterPro" id="IPR023195">
    <property type="entry name" value="Nict_dMeBzImd_PRibTrfase_N"/>
</dbReference>
<dbReference type="InterPro" id="IPR036087">
    <property type="entry name" value="Nict_dMeBzImd_PRibTrfase_sf"/>
</dbReference>
<dbReference type="NCBIfam" id="TIGR03160">
    <property type="entry name" value="cobT_DBIPRT"/>
    <property type="match status" value="1"/>
</dbReference>
<dbReference type="NCBIfam" id="NF000996">
    <property type="entry name" value="PRK00105.1"/>
    <property type="match status" value="1"/>
</dbReference>
<dbReference type="PANTHER" id="PTHR43463">
    <property type="entry name" value="NICOTINATE-NUCLEOTIDE--DIMETHYLBENZIMIDAZOLE PHOSPHORIBOSYLTRANSFERASE"/>
    <property type="match status" value="1"/>
</dbReference>
<dbReference type="PANTHER" id="PTHR43463:SF1">
    <property type="entry name" value="NICOTINATE-NUCLEOTIDE--DIMETHYLBENZIMIDAZOLE PHOSPHORIBOSYLTRANSFERASE"/>
    <property type="match status" value="1"/>
</dbReference>
<dbReference type="Pfam" id="PF02277">
    <property type="entry name" value="DBI_PRT"/>
    <property type="match status" value="1"/>
</dbReference>
<dbReference type="SUPFAM" id="SSF52733">
    <property type="entry name" value="Nicotinate mononucleotide:5,6-dimethylbenzimidazole phosphoribosyltransferase (CobT)"/>
    <property type="match status" value="1"/>
</dbReference>
<proteinExistence type="inferred from homology"/>